<proteinExistence type="evidence at protein level"/>
<protein>
    <recommendedName>
        <fullName>Zygotic DNA replication licensing factor mcm6-A</fullName>
        <ecNumber>3.6.4.12</ecNumber>
    </recommendedName>
    <alternativeName>
        <fullName>Zygotic minichromosome maintenance protein 6-A</fullName>
        <shortName>zMCM6-A</shortName>
        <shortName>zMCM6a</shortName>
    </alternativeName>
</protein>
<name>MC6ZA_XENLA</name>
<comment type="function">
    <text>Acts as a component of the mcm2-7 complex (mcm complex) which is the putative replicative helicase essential for 'once per cell cycle' DNA replication initiation and elongation in eukaryotic cells. The active ATPase sites in the mcm2-7 ring are formed through the interaction surfaces of two neighboring subunits such that a critical structure of a conserved arginine finger motif is provided in trans relative to the ATP-binding site of the Walker A box of the adjacent subunit. The six ATPase active sites, however, are likely to contribute differentially to the complex helicase activity. The existence of maternal and zygotic forms of mcm3 and mcm6 suggests that specific forms of mcm2-7 complexes may be used during different stages of development. May replace mmcm6 in the mcm2-7 complex.</text>
</comment>
<comment type="catalytic activity">
    <reaction>
        <text>ATP + H2O = ADP + phosphate + H(+)</text>
        <dbReference type="Rhea" id="RHEA:13065"/>
        <dbReference type="ChEBI" id="CHEBI:15377"/>
        <dbReference type="ChEBI" id="CHEBI:15378"/>
        <dbReference type="ChEBI" id="CHEBI:30616"/>
        <dbReference type="ChEBI" id="CHEBI:43474"/>
        <dbReference type="ChEBI" id="CHEBI:456216"/>
        <dbReference type="EC" id="3.6.4.12"/>
    </reaction>
</comment>
<comment type="subunit">
    <text evidence="4">Component of the mcm2-7 complex (RLF-M). The complex forms a toroidal hexameric ring with the proposed subunit order mcm2-mcm6-mcm4-mcm7-mcm3-mcm5 (By simililarity). Begins to associate with zmcm3, mcm4 and mcm7 into mcm complexes at the neurula stage. May replace mmcm6 in the complex that functions during licensing of DNA replication.</text>
</comment>
<comment type="subcellular location">
    <subcellularLocation>
        <location evidence="1">Nucleus</location>
    </subcellularLocation>
    <text evidence="1">Associated with chromatin before the formation of nuclei and detaches from it as DNA replication progresses.</text>
</comment>
<comment type="developmental stage">
    <text evidence="4">Expressed zygotically. Expression begins after the midblastula transition (MBT) at the neurula stage.</text>
</comment>
<comment type="similarity">
    <text evidence="2">Belongs to the MCM family.</text>
</comment>
<sequence>MDLVDPSQSAAAAAGTQLVKDEVAEKCQKLFQDFLEEFQGSDGELKYQSDAEELIRPERNTLLVSFVDLEQFNQQLATTIQEEFYRVYPYLCRAVRAFARDHGNIPQNKEFYVAFQDLPTRHKIRELTTPRIGSLLRISAQVVRTHPVHPELVSGTFLCLDCQTLVRDVEQQFKYTQPSICRNPVCANRRRFMLDTNKSRFVDFQKVRIQETQAELPRGSIPRSVEVILRAEAVESCQAGDRCDFTGSLIVVPDISQLSTPGVRAETSSRVGGREGYEAEGVQGLRALGVRDLSYKLVFLACYVCPTNPRFGGKELHEEDMTAESIKNQMSVKEWEKVFEMSQDKNLYHNLCTSLFPTVHGNDEVKRGILLMLFGGVPKSTMEGTSLRGDINVCVVGDPSTAKSQFLKHVEEFSPRAVYTSGKASTAAGLTAAVVKDEESHEFVIEAGALMLADNGVCCIDEFDKMDTKDQVAIHEAMEQQTISITKAGVKATLNARTSILAAANPVGGRYDRAKSLKQNVNLSAPIMSRFDLFFILVDECNEVTDYAIARRIVDLHSRIEESIDRVYTVDEVRRYLLFARQFKPKISKESADFIVEQYKRLRQRDGSGVTKSAWRITVRQLESMIRLSEGMARMHCSDEVQPKHVKEAFRLLNKSIIRVETPDVNLDQDDEHEPEDETQEGTNGDAEVPNGVNGHVNGINGHSQESNAAAAKPSLRLNFAEYKRISNLLVQQLRKMEDEDETSQRRSELMNWYLKEIESEIDSEEELINRKQIIDKVIHRLVHYDQILIELTQTELKGTGDEVVAKEEDPYLVVNPNYILED</sequence>
<dbReference type="EC" id="3.6.4.12"/>
<dbReference type="EMBL" id="BC078072">
    <property type="protein sequence ID" value="AAH78072.1"/>
    <property type="molecule type" value="mRNA"/>
</dbReference>
<dbReference type="EMBL" id="BC100191">
    <property type="protein sequence ID" value="AAI00192.1"/>
    <property type="molecule type" value="mRNA"/>
</dbReference>
<dbReference type="EMBL" id="AF031140">
    <property type="protein sequence ID" value="AAC41268.1"/>
    <property type="molecule type" value="mRNA"/>
</dbReference>
<dbReference type="SMR" id="Q498J7"/>
<dbReference type="IntAct" id="Q498J7">
    <property type="interactions" value="1"/>
</dbReference>
<dbReference type="MINT" id="Q498J7"/>
<dbReference type="DNASU" id="394426"/>
<dbReference type="GeneID" id="394426"/>
<dbReference type="KEGG" id="xla:394426"/>
<dbReference type="AGR" id="Xenbase:XB-GENE-962683"/>
<dbReference type="CTD" id="394426"/>
<dbReference type="Xenbase" id="XB-GENE-962683">
    <property type="gene designation" value="mcm6.L"/>
</dbReference>
<dbReference type="OrthoDB" id="1744952at2759"/>
<dbReference type="Proteomes" id="UP000186698">
    <property type="component" value="Chromosome 9_10L"/>
</dbReference>
<dbReference type="Bgee" id="394426">
    <property type="expression patterns" value="Expressed in neurula embryo and 19 other cell types or tissues"/>
</dbReference>
<dbReference type="GO" id="GO:0042555">
    <property type="term" value="C:MCM complex"/>
    <property type="evidence" value="ECO:0000353"/>
    <property type="project" value="UniProtKB"/>
</dbReference>
<dbReference type="GO" id="GO:0005634">
    <property type="term" value="C:nucleus"/>
    <property type="evidence" value="ECO:0000318"/>
    <property type="project" value="GO_Central"/>
</dbReference>
<dbReference type="GO" id="GO:0005524">
    <property type="term" value="F:ATP binding"/>
    <property type="evidence" value="ECO:0007669"/>
    <property type="project" value="UniProtKB-KW"/>
</dbReference>
<dbReference type="GO" id="GO:0016887">
    <property type="term" value="F:ATP hydrolysis activity"/>
    <property type="evidence" value="ECO:0007669"/>
    <property type="project" value="RHEA"/>
</dbReference>
<dbReference type="GO" id="GO:1990518">
    <property type="term" value="F:single-stranded 3'-5' DNA helicase activity"/>
    <property type="evidence" value="ECO:0007669"/>
    <property type="project" value="TreeGrafter"/>
</dbReference>
<dbReference type="GO" id="GO:0003697">
    <property type="term" value="F:single-stranded DNA binding"/>
    <property type="evidence" value="ECO:0000318"/>
    <property type="project" value="GO_Central"/>
</dbReference>
<dbReference type="GO" id="GO:0008270">
    <property type="term" value="F:zinc ion binding"/>
    <property type="evidence" value="ECO:0007669"/>
    <property type="project" value="UniProtKB-KW"/>
</dbReference>
<dbReference type="GO" id="GO:0006260">
    <property type="term" value="P:DNA replication"/>
    <property type="evidence" value="ECO:0000318"/>
    <property type="project" value="GO_Central"/>
</dbReference>
<dbReference type="GO" id="GO:0006270">
    <property type="term" value="P:DNA replication initiation"/>
    <property type="evidence" value="ECO:0007669"/>
    <property type="project" value="InterPro"/>
</dbReference>
<dbReference type="GO" id="GO:0000727">
    <property type="term" value="P:double-strand break repair via break-induced replication"/>
    <property type="evidence" value="ECO:0000318"/>
    <property type="project" value="GO_Central"/>
</dbReference>
<dbReference type="GO" id="GO:1902969">
    <property type="term" value="P:mitotic DNA replication"/>
    <property type="evidence" value="ECO:0000318"/>
    <property type="project" value="GO_Central"/>
</dbReference>
<dbReference type="GO" id="GO:0030174">
    <property type="term" value="P:regulation of DNA-templated DNA replication initiation"/>
    <property type="evidence" value="ECO:0000305"/>
    <property type="project" value="UniProtKB"/>
</dbReference>
<dbReference type="CDD" id="cd17757">
    <property type="entry name" value="MCM6"/>
    <property type="match status" value="1"/>
</dbReference>
<dbReference type="FunFam" id="1.20.58.870:FF:000001">
    <property type="entry name" value="DNA helicase"/>
    <property type="match status" value="1"/>
</dbReference>
<dbReference type="FunFam" id="2.20.28.10:FF:000003">
    <property type="entry name" value="DNA helicase"/>
    <property type="match status" value="1"/>
</dbReference>
<dbReference type="FunFam" id="2.40.50.140:FF:000091">
    <property type="entry name" value="DNA helicase"/>
    <property type="match status" value="1"/>
</dbReference>
<dbReference type="FunFam" id="3.30.1640.10:FF:000004">
    <property type="entry name" value="DNA helicase"/>
    <property type="match status" value="1"/>
</dbReference>
<dbReference type="FunFam" id="3.40.50.300:FF:000115">
    <property type="entry name" value="DNA helicase"/>
    <property type="match status" value="1"/>
</dbReference>
<dbReference type="Gene3D" id="1.20.58.870">
    <property type="match status" value="1"/>
</dbReference>
<dbReference type="Gene3D" id="2.20.28.10">
    <property type="match status" value="1"/>
</dbReference>
<dbReference type="Gene3D" id="3.30.1640.10">
    <property type="entry name" value="mini-chromosome maintenance (MCM) complex, chain A, domain 1"/>
    <property type="match status" value="1"/>
</dbReference>
<dbReference type="Gene3D" id="2.40.50.140">
    <property type="entry name" value="Nucleic acid-binding proteins"/>
    <property type="match status" value="1"/>
</dbReference>
<dbReference type="Gene3D" id="3.40.50.300">
    <property type="entry name" value="P-loop containing nucleotide triphosphate hydrolases"/>
    <property type="match status" value="1"/>
</dbReference>
<dbReference type="InterPro" id="IPR031327">
    <property type="entry name" value="MCM"/>
</dbReference>
<dbReference type="InterPro" id="IPR008049">
    <property type="entry name" value="MCM6"/>
</dbReference>
<dbReference type="InterPro" id="IPR041024">
    <property type="entry name" value="Mcm6_C"/>
</dbReference>
<dbReference type="InterPro" id="IPR018525">
    <property type="entry name" value="MCM_CS"/>
</dbReference>
<dbReference type="InterPro" id="IPR001208">
    <property type="entry name" value="MCM_dom"/>
</dbReference>
<dbReference type="InterPro" id="IPR041562">
    <property type="entry name" value="MCM_lid"/>
</dbReference>
<dbReference type="InterPro" id="IPR027925">
    <property type="entry name" value="MCM_N"/>
</dbReference>
<dbReference type="InterPro" id="IPR033762">
    <property type="entry name" value="MCM_OB"/>
</dbReference>
<dbReference type="InterPro" id="IPR012340">
    <property type="entry name" value="NA-bd_OB-fold"/>
</dbReference>
<dbReference type="InterPro" id="IPR027417">
    <property type="entry name" value="P-loop_NTPase"/>
</dbReference>
<dbReference type="PANTHER" id="PTHR11630">
    <property type="entry name" value="DNA REPLICATION LICENSING FACTOR MCM FAMILY MEMBER"/>
    <property type="match status" value="1"/>
</dbReference>
<dbReference type="PANTHER" id="PTHR11630:SF73">
    <property type="entry name" value="DNA REPLICATION LICENSING FACTOR MCM6"/>
    <property type="match status" value="1"/>
</dbReference>
<dbReference type="Pfam" id="PF00493">
    <property type="entry name" value="MCM"/>
    <property type="match status" value="1"/>
</dbReference>
<dbReference type="Pfam" id="PF18263">
    <property type="entry name" value="MCM6_C"/>
    <property type="match status" value="1"/>
</dbReference>
<dbReference type="Pfam" id="PF17855">
    <property type="entry name" value="MCM_lid"/>
    <property type="match status" value="1"/>
</dbReference>
<dbReference type="Pfam" id="PF14551">
    <property type="entry name" value="MCM_N"/>
    <property type="match status" value="1"/>
</dbReference>
<dbReference type="Pfam" id="PF17207">
    <property type="entry name" value="MCM_OB"/>
    <property type="match status" value="1"/>
</dbReference>
<dbReference type="PRINTS" id="PR01657">
    <property type="entry name" value="MCMFAMILY"/>
</dbReference>
<dbReference type="PRINTS" id="PR01662">
    <property type="entry name" value="MCMPROTEIN6"/>
</dbReference>
<dbReference type="SMART" id="SM00350">
    <property type="entry name" value="MCM"/>
    <property type="match status" value="1"/>
</dbReference>
<dbReference type="SUPFAM" id="SSF50249">
    <property type="entry name" value="Nucleic acid-binding proteins"/>
    <property type="match status" value="1"/>
</dbReference>
<dbReference type="SUPFAM" id="SSF52540">
    <property type="entry name" value="P-loop containing nucleoside triphosphate hydrolases"/>
    <property type="match status" value="1"/>
</dbReference>
<dbReference type="PROSITE" id="PS00847">
    <property type="entry name" value="MCM_1"/>
    <property type="match status" value="1"/>
</dbReference>
<dbReference type="PROSITE" id="PS50051">
    <property type="entry name" value="MCM_2"/>
    <property type="match status" value="1"/>
</dbReference>
<evidence type="ECO:0000250" key="1"/>
<evidence type="ECO:0000255" key="2"/>
<evidence type="ECO:0000256" key="3">
    <source>
        <dbReference type="SAM" id="MobiDB-lite"/>
    </source>
</evidence>
<evidence type="ECO:0000269" key="4">
    <source>
    </source>
</evidence>
<evidence type="ECO:0000303" key="5">
    <source>
    </source>
</evidence>
<evidence type="ECO:0000305" key="6"/>
<evidence type="ECO:0000312" key="7">
    <source>
        <dbReference type="EMBL" id="AAC41268.1"/>
    </source>
</evidence>
<evidence type="ECO:0000312" key="8">
    <source>
        <dbReference type="EMBL" id="AAH78072.1"/>
    </source>
</evidence>
<feature type="chain" id="PRO_0000235884" description="Zygotic DNA replication licensing factor mcm6-A">
    <location>
        <begin position="1"/>
        <end position="823"/>
    </location>
</feature>
<feature type="domain" description="MCM" evidence="2">
    <location>
        <begin position="347"/>
        <end position="554"/>
    </location>
</feature>
<feature type="zinc finger region" description="C4-type" evidence="2">
    <location>
        <begin position="159"/>
        <end position="186"/>
    </location>
</feature>
<feature type="region of interest" description="Disordered" evidence="3">
    <location>
        <begin position="663"/>
        <end position="710"/>
    </location>
</feature>
<feature type="short sequence motif" description="Arginine finger">
    <location>
        <begin position="529"/>
        <end position="532"/>
    </location>
</feature>
<feature type="compositionally biased region" description="Acidic residues" evidence="3">
    <location>
        <begin position="667"/>
        <end position="680"/>
    </location>
</feature>
<feature type="compositionally biased region" description="Low complexity" evidence="3">
    <location>
        <begin position="691"/>
        <end position="703"/>
    </location>
</feature>
<feature type="binding site" evidence="2">
    <location>
        <begin position="397"/>
        <end position="404"/>
    </location>
    <ligand>
        <name>ATP</name>
        <dbReference type="ChEBI" id="CHEBI:30616"/>
    </ligand>
</feature>
<feature type="sequence conflict" description="In Ref. 1; AAH78072." evidence="6" ref="1">
    <original>G</original>
    <variation>S</variation>
    <location>
        <position position="103"/>
    </location>
</feature>
<accession>Q498J7</accession>
<accession>O73711</accession>
<accession>Q6AZF4</accession>
<reference evidence="8" key="1">
    <citation type="submission" date="2004-07" db="EMBL/GenBank/DDBJ databases">
        <authorList>
            <consortium name="NIH - Xenopus Gene Collection (XGC) project"/>
        </authorList>
    </citation>
    <scope>NUCLEOTIDE SEQUENCE [LARGE SCALE MRNA]</scope>
    <source>
        <tissue evidence="8">Embryo</tissue>
    </source>
</reference>
<reference evidence="6 7" key="2">
    <citation type="journal article" date="1998" name="Curr. Biol.">
        <title>Developmental regulation of MCM replication factors in Xenopus laevis.</title>
        <authorList>
            <person name="Sible J.C."/>
            <person name="Erikson E."/>
            <person name="Hendrickson M."/>
            <person name="Maller J.L."/>
            <person name="Gautier J."/>
        </authorList>
    </citation>
    <scope>NUCLEOTIDE SEQUENCE [MRNA] OF 663-823</scope>
    <scope>IDENTIFICATION IN A COMPLEX WITH ZMCM3; MCM4 AND MCM7</scope>
    <scope>DEVELOPMENTAL STAGE</scope>
    <source>
        <tissue evidence="4">Embryo</tissue>
    </source>
</reference>
<organism>
    <name type="scientific">Xenopus laevis</name>
    <name type="common">African clawed frog</name>
    <dbReference type="NCBI Taxonomy" id="8355"/>
    <lineage>
        <taxon>Eukaryota</taxon>
        <taxon>Metazoa</taxon>
        <taxon>Chordata</taxon>
        <taxon>Craniata</taxon>
        <taxon>Vertebrata</taxon>
        <taxon>Euteleostomi</taxon>
        <taxon>Amphibia</taxon>
        <taxon>Batrachia</taxon>
        <taxon>Anura</taxon>
        <taxon>Pipoidea</taxon>
        <taxon>Pipidae</taxon>
        <taxon>Xenopodinae</taxon>
        <taxon>Xenopus</taxon>
        <taxon>Xenopus</taxon>
    </lineage>
</organism>
<gene>
    <name type="primary">zmcm6-a</name>
    <name evidence="5" type="synonym">zmcm6a</name>
</gene>
<keyword id="KW-0067">ATP-binding</keyword>
<keyword id="KW-0131">Cell cycle</keyword>
<keyword id="KW-0235">DNA replication</keyword>
<keyword id="KW-0238">DNA-binding</keyword>
<keyword id="KW-0347">Helicase</keyword>
<keyword id="KW-0378">Hydrolase</keyword>
<keyword id="KW-0479">Metal-binding</keyword>
<keyword id="KW-0547">Nucleotide-binding</keyword>
<keyword id="KW-0539">Nucleus</keyword>
<keyword id="KW-1185">Reference proteome</keyword>
<keyword id="KW-0862">Zinc</keyword>
<keyword id="KW-0863">Zinc-finger</keyword>